<comment type="function">
    <text evidence="1">Part of the tripartite efflux system MacAB-TolC. MacB is a non-canonical ABC transporter that contains transmembrane domains (TMD), which form a pore in the inner membrane, and an ATP-binding domain (NBD), which is responsible for energy generation. Confers resistance against macrolides.</text>
</comment>
<comment type="subunit">
    <text evidence="1">Homodimer. Part of the tripartite efflux system MacAB-TolC, which is composed of an inner membrane transporter, MacB, a periplasmic membrane fusion protein, MacA, and an outer membrane component, TolC. The complex forms a large protein conduit and can translocate molecules across both the inner and outer membranes. Interacts with MacA.</text>
</comment>
<comment type="subcellular location">
    <subcellularLocation>
        <location evidence="1">Cell inner membrane</location>
        <topology evidence="1">Multi-pass membrane protein</topology>
    </subcellularLocation>
</comment>
<comment type="similarity">
    <text evidence="1">Belongs to the ABC transporter superfamily. Macrolide exporter (TC 3.A.1.122) family.</text>
</comment>
<feature type="chain" id="PRO_0000269938" description="Macrolide export ATP-binding/permease protein MacB">
    <location>
        <begin position="1"/>
        <end position="650"/>
    </location>
</feature>
<feature type="transmembrane region" description="Helical" evidence="1">
    <location>
        <begin position="275"/>
        <end position="295"/>
    </location>
</feature>
<feature type="transmembrane region" description="Helical" evidence="1">
    <location>
        <begin position="523"/>
        <end position="543"/>
    </location>
</feature>
<feature type="transmembrane region" description="Helical" evidence="1">
    <location>
        <begin position="580"/>
        <end position="600"/>
    </location>
</feature>
<feature type="transmembrane region" description="Helical" evidence="1">
    <location>
        <begin position="615"/>
        <end position="635"/>
    </location>
</feature>
<feature type="domain" description="ABC transporter" evidence="1">
    <location>
        <begin position="6"/>
        <end position="244"/>
    </location>
</feature>
<feature type="region of interest" description="Disordered" evidence="2">
    <location>
        <begin position="227"/>
        <end position="246"/>
    </location>
</feature>
<feature type="compositionally biased region" description="Low complexity" evidence="2">
    <location>
        <begin position="233"/>
        <end position="246"/>
    </location>
</feature>
<feature type="binding site" evidence="1">
    <location>
        <begin position="42"/>
        <end position="49"/>
    </location>
    <ligand>
        <name>ATP</name>
        <dbReference type="ChEBI" id="CHEBI:30616"/>
    </ligand>
</feature>
<reference key="1">
    <citation type="journal article" date="2004" name="Proc. Natl. Acad. Sci. U.S.A.">
        <title>Genome sequence of the enterobacterial phytopathogen Erwinia carotovora subsp. atroseptica and characterization of virulence factors.</title>
        <authorList>
            <person name="Bell K.S."/>
            <person name="Sebaihia M."/>
            <person name="Pritchard L."/>
            <person name="Holden M.T.G."/>
            <person name="Hyman L.J."/>
            <person name="Holeva M.C."/>
            <person name="Thomson N.R."/>
            <person name="Bentley S.D."/>
            <person name="Churcher L.J.C."/>
            <person name="Mungall K."/>
            <person name="Atkin R."/>
            <person name="Bason N."/>
            <person name="Brooks K."/>
            <person name="Chillingworth T."/>
            <person name="Clark K."/>
            <person name="Doggett J."/>
            <person name="Fraser A."/>
            <person name="Hance Z."/>
            <person name="Hauser H."/>
            <person name="Jagels K."/>
            <person name="Moule S."/>
            <person name="Norbertczak H."/>
            <person name="Ormond D."/>
            <person name="Price C."/>
            <person name="Quail M.A."/>
            <person name="Sanders M."/>
            <person name="Walker D."/>
            <person name="Whitehead S."/>
            <person name="Salmond G.P.C."/>
            <person name="Birch P.R.J."/>
            <person name="Parkhill J."/>
            <person name="Toth I.K."/>
        </authorList>
    </citation>
    <scope>NUCLEOTIDE SEQUENCE [LARGE SCALE GENOMIC DNA]</scope>
    <source>
        <strain>SCRI 1043 / ATCC BAA-672</strain>
    </source>
</reference>
<dbReference type="EC" id="7.6.2.-" evidence="1"/>
<dbReference type="EMBL" id="BX950851">
    <property type="protein sequence ID" value="CAG73799.1"/>
    <property type="molecule type" value="Genomic_DNA"/>
</dbReference>
<dbReference type="RefSeq" id="WP_011092490.1">
    <property type="nucleotide sequence ID" value="NC_004547.2"/>
</dbReference>
<dbReference type="SMR" id="Q6D8T5"/>
<dbReference type="STRING" id="218491.ECA0887"/>
<dbReference type="KEGG" id="eca:ECA0887"/>
<dbReference type="PATRIC" id="fig|218491.5.peg.890"/>
<dbReference type="eggNOG" id="COG0577">
    <property type="taxonomic scope" value="Bacteria"/>
</dbReference>
<dbReference type="eggNOG" id="COG1136">
    <property type="taxonomic scope" value="Bacteria"/>
</dbReference>
<dbReference type="HOGENOM" id="CLU_000604_78_1_6"/>
<dbReference type="OrthoDB" id="9770036at2"/>
<dbReference type="Proteomes" id="UP000007966">
    <property type="component" value="Chromosome"/>
</dbReference>
<dbReference type="GO" id="GO:0005886">
    <property type="term" value="C:plasma membrane"/>
    <property type="evidence" value="ECO:0007669"/>
    <property type="project" value="UniProtKB-SubCell"/>
</dbReference>
<dbReference type="GO" id="GO:0005524">
    <property type="term" value="F:ATP binding"/>
    <property type="evidence" value="ECO:0007669"/>
    <property type="project" value="UniProtKB-KW"/>
</dbReference>
<dbReference type="GO" id="GO:0016887">
    <property type="term" value="F:ATP hydrolysis activity"/>
    <property type="evidence" value="ECO:0007669"/>
    <property type="project" value="InterPro"/>
</dbReference>
<dbReference type="GO" id="GO:0022857">
    <property type="term" value="F:transmembrane transporter activity"/>
    <property type="evidence" value="ECO:0007669"/>
    <property type="project" value="TreeGrafter"/>
</dbReference>
<dbReference type="GO" id="GO:0046677">
    <property type="term" value="P:response to antibiotic"/>
    <property type="evidence" value="ECO:0007669"/>
    <property type="project" value="UniProtKB-KW"/>
</dbReference>
<dbReference type="CDD" id="cd03255">
    <property type="entry name" value="ABC_MJ0796_LolCDE_FtsE"/>
    <property type="match status" value="1"/>
</dbReference>
<dbReference type="FunFam" id="3.40.50.300:FF:000032">
    <property type="entry name" value="Export ABC transporter ATP-binding protein"/>
    <property type="match status" value="1"/>
</dbReference>
<dbReference type="Gene3D" id="3.40.50.300">
    <property type="entry name" value="P-loop containing nucleotide triphosphate hydrolases"/>
    <property type="match status" value="1"/>
</dbReference>
<dbReference type="InterPro" id="IPR003593">
    <property type="entry name" value="AAA+_ATPase"/>
</dbReference>
<dbReference type="InterPro" id="IPR003838">
    <property type="entry name" value="ABC3_permease_C"/>
</dbReference>
<dbReference type="InterPro" id="IPR003439">
    <property type="entry name" value="ABC_transporter-like_ATP-bd"/>
</dbReference>
<dbReference type="InterPro" id="IPR017871">
    <property type="entry name" value="ABC_transporter-like_CS"/>
</dbReference>
<dbReference type="InterPro" id="IPR017911">
    <property type="entry name" value="MacB-like_ATP-bd"/>
</dbReference>
<dbReference type="InterPro" id="IPR025857">
    <property type="entry name" value="MacB_PCD"/>
</dbReference>
<dbReference type="InterPro" id="IPR050250">
    <property type="entry name" value="Macrolide_Exporter_MacB"/>
</dbReference>
<dbReference type="InterPro" id="IPR027417">
    <property type="entry name" value="P-loop_NTPase"/>
</dbReference>
<dbReference type="PANTHER" id="PTHR30572:SF14">
    <property type="entry name" value="MACROLIDE EXPORT ATP-BINDING_PERMEASE PROTEIN MACB"/>
    <property type="match status" value="1"/>
</dbReference>
<dbReference type="PANTHER" id="PTHR30572">
    <property type="entry name" value="MEMBRANE COMPONENT OF TRANSPORTER-RELATED"/>
    <property type="match status" value="1"/>
</dbReference>
<dbReference type="Pfam" id="PF00005">
    <property type="entry name" value="ABC_tran"/>
    <property type="match status" value="1"/>
</dbReference>
<dbReference type="Pfam" id="PF02687">
    <property type="entry name" value="FtsX"/>
    <property type="match status" value="1"/>
</dbReference>
<dbReference type="Pfam" id="PF12704">
    <property type="entry name" value="MacB_PCD"/>
    <property type="match status" value="1"/>
</dbReference>
<dbReference type="SMART" id="SM00382">
    <property type="entry name" value="AAA"/>
    <property type="match status" value="1"/>
</dbReference>
<dbReference type="SUPFAM" id="SSF52540">
    <property type="entry name" value="P-loop containing nucleoside triphosphate hydrolases"/>
    <property type="match status" value="1"/>
</dbReference>
<dbReference type="PROSITE" id="PS00211">
    <property type="entry name" value="ABC_TRANSPORTER_1"/>
    <property type="match status" value="1"/>
</dbReference>
<dbReference type="PROSITE" id="PS50893">
    <property type="entry name" value="ABC_TRANSPORTER_2"/>
    <property type="match status" value="1"/>
</dbReference>
<dbReference type="PROSITE" id="PS51267">
    <property type="entry name" value="MACB"/>
    <property type="match status" value="1"/>
</dbReference>
<accession>Q6D8T5</accession>
<gene>
    <name evidence="1" type="primary">macB</name>
    <name type="ordered locus">ECA0887</name>
</gene>
<evidence type="ECO:0000255" key="1">
    <source>
        <dbReference type="HAMAP-Rule" id="MF_01720"/>
    </source>
</evidence>
<evidence type="ECO:0000256" key="2">
    <source>
        <dbReference type="SAM" id="MobiDB-lite"/>
    </source>
</evidence>
<keyword id="KW-0046">Antibiotic resistance</keyword>
<keyword id="KW-0067">ATP-binding</keyword>
<keyword id="KW-0997">Cell inner membrane</keyword>
<keyword id="KW-1003">Cell membrane</keyword>
<keyword id="KW-0472">Membrane</keyword>
<keyword id="KW-0547">Nucleotide-binding</keyword>
<keyword id="KW-1185">Reference proteome</keyword>
<keyword id="KW-1278">Translocase</keyword>
<keyword id="KW-0812">Transmembrane</keyword>
<keyword id="KW-1133">Transmembrane helix</keyword>
<keyword id="KW-0813">Transport</keyword>
<sequence>MSTSLLKLTGITRRFTNGEQDVTVLKDINLTINQGEMVAIVGASGSGKSTLMNILGCLDKPSAGDYQVAGRAVGKLDNDQLAELRREHFGFIFQRYHLLGDLTALGNVEVPAIYAGKSRLARRQRAADLLTRLGLENRLHYRPSQLSGGQQQRVSIARALMNAGGIILADEPTGALDTHSGNEVLSILRDLHRQGNTVVIVTHDMTIAEHAQRVIELRDGEVIADRQTRPEEATASSPEAASSPATSALNQFKDRFIDAFKMALLAMNAQRMRTFLTMLGIIIGIASVVSVVALGKGSQEQVLANINSMGTSTLEIFPGKGFGDMDASAIQTLRASDIQPLTQQPYVHSVTPSVSTSVTMRYGNIAVSASISGVGEQFFTVRGYTLERGVLFPRSSVDELTQDAVIDKNTRDKLFPHGEDPIGQVILVGSLPVRIIGVVSKNQGGFGSDENLNVWVPYTTVMKRMVGQSYLKSITVRVKDNVDMSIAEQRITDLLMQRHGTKDFFIMNTDSIRQMIEKTTTTLTLLVSMIALISLLVGGIGVMNIMLVSVTERTREIGVRMAVGARTSDIMQQFLIEAVLVCLFGGIAGVALSLAIGVLFAQLSSNFAMIYSSSSIIAAFLCSSLIGIIFGFFPARRAARMEPIHALERE</sequence>
<protein>
    <recommendedName>
        <fullName evidence="1">Macrolide export ATP-binding/permease protein MacB</fullName>
        <ecNumber evidence="1">7.6.2.-</ecNumber>
    </recommendedName>
</protein>
<organism>
    <name type="scientific">Pectobacterium atrosepticum (strain SCRI 1043 / ATCC BAA-672)</name>
    <name type="common">Erwinia carotovora subsp. atroseptica</name>
    <dbReference type="NCBI Taxonomy" id="218491"/>
    <lineage>
        <taxon>Bacteria</taxon>
        <taxon>Pseudomonadati</taxon>
        <taxon>Pseudomonadota</taxon>
        <taxon>Gammaproteobacteria</taxon>
        <taxon>Enterobacterales</taxon>
        <taxon>Pectobacteriaceae</taxon>
        <taxon>Pectobacterium</taxon>
    </lineage>
</organism>
<proteinExistence type="inferred from homology"/>
<name>MACB_PECAS</name>